<organism>
    <name type="scientific">Bacillus thuringiensis subsp. konkukian (strain 97-27)</name>
    <dbReference type="NCBI Taxonomy" id="281309"/>
    <lineage>
        <taxon>Bacteria</taxon>
        <taxon>Bacillati</taxon>
        <taxon>Bacillota</taxon>
        <taxon>Bacilli</taxon>
        <taxon>Bacillales</taxon>
        <taxon>Bacillaceae</taxon>
        <taxon>Bacillus</taxon>
        <taxon>Bacillus cereus group</taxon>
    </lineage>
</organism>
<accession>Q6HFI9</accession>
<evidence type="ECO:0000255" key="1">
    <source>
        <dbReference type="HAMAP-Rule" id="MF_01506"/>
    </source>
</evidence>
<feature type="chain" id="PRO_0000221499" description="Small, acid-soluble spore protein Tlp">
    <location>
        <begin position="1"/>
        <end position="65"/>
    </location>
</feature>
<gene>
    <name evidence="1" type="primary">tlp</name>
    <name type="ordered locus">BT9727_3365</name>
</gene>
<dbReference type="EMBL" id="AE017355">
    <property type="protein sequence ID" value="AAT63048.1"/>
    <property type="molecule type" value="Genomic_DNA"/>
</dbReference>
<dbReference type="RefSeq" id="WP_001133509.1">
    <property type="nucleotide sequence ID" value="NC_005957.1"/>
</dbReference>
<dbReference type="RefSeq" id="YP_037687.1">
    <property type="nucleotide sequence ID" value="NC_005957.1"/>
</dbReference>
<dbReference type="SMR" id="Q6HFI9"/>
<dbReference type="GeneID" id="93007575"/>
<dbReference type="KEGG" id="btk:BT9727_3365"/>
<dbReference type="PATRIC" id="fig|281309.8.peg.3586"/>
<dbReference type="HOGENOM" id="CLU_178266_1_0_9"/>
<dbReference type="Proteomes" id="UP000001301">
    <property type="component" value="Chromosome"/>
</dbReference>
<dbReference type="GO" id="GO:0030436">
    <property type="term" value="P:asexual sporulation"/>
    <property type="evidence" value="ECO:0007669"/>
    <property type="project" value="UniProtKB-UniRule"/>
</dbReference>
<dbReference type="GO" id="GO:0030435">
    <property type="term" value="P:sporulation resulting in formation of a cellular spore"/>
    <property type="evidence" value="ECO:0007669"/>
    <property type="project" value="UniProtKB-KW"/>
</dbReference>
<dbReference type="HAMAP" id="MF_01506">
    <property type="entry name" value="Tlp"/>
    <property type="match status" value="1"/>
</dbReference>
<dbReference type="InterPro" id="IPR017524">
    <property type="entry name" value="SASP_thioredoxin-like"/>
</dbReference>
<dbReference type="NCBIfam" id="TIGR03090">
    <property type="entry name" value="SASP_tlp"/>
    <property type="match status" value="1"/>
</dbReference>
<dbReference type="Pfam" id="PF19824">
    <property type="entry name" value="Tlp"/>
    <property type="match status" value="1"/>
</dbReference>
<protein>
    <recommendedName>
        <fullName evidence="1">Small, acid-soluble spore protein Tlp</fullName>
    </recommendedName>
</protein>
<proteinExistence type="inferred from homology"/>
<sequence length="65" mass="7466">MPNPDNRSDNAEKLQEMVQNTIDNFNEAKETAELSNEKDRSAIEAKNQRRLESIDSLKSEIKDES</sequence>
<reference key="1">
    <citation type="journal article" date="2006" name="J. Bacteriol.">
        <title>Pathogenomic sequence analysis of Bacillus cereus and Bacillus thuringiensis isolates closely related to Bacillus anthracis.</title>
        <authorList>
            <person name="Han C.S."/>
            <person name="Xie G."/>
            <person name="Challacombe J.F."/>
            <person name="Altherr M.R."/>
            <person name="Bhotika S.S."/>
            <person name="Bruce D."/>
            <person name="Campbell C.S."/>
            <person name="Campbell M.L."/>
            <person name="Chen J."/>
            <person name="Chertkov O."/>
            <person name="Cleland C."/>
            <person name="Dimitrijevic M."/>
            <person name="Doggett N.A."/>
            <person name="Fawcett J.J."/>
            <person name="Glavina T."/>
            <person name="Goodwin L.A."/>
            <person name="Hill K.K."/>
            <person name="Hitchcock P."/>
            <person name="Jackson P.J."/>
            <person name="Keim P."/>
            <person name="Kewalramani A.R."/>
            <person name="Longmire J."/>
            <person name="Lucas S."/>
            <person name="Malfatti S."/>
            <person name="McMurry K."/>
            <person name="Meincke L.J."/>
            <person name="Misra M."/>
            <person name="Moseman B.L."/>
            <person name="Mundt M."/>
            <person name="Munk A.C."/>
            <person name="Okinaka R.T."/>
            <person name="Parson-Quintana B."/>
            <person name="Reilly L.P."/>
            <person name="Richardson P."/>
            <person name="Robinson D.L."/>
            <person name="Rubin E."/>
            <person name="Saunders E."/>
            <person name="Tapia R."/>
            <person name="Tesmer J.G."/>
            <person name="Thayer N."/>
            <person name="Thompson L.S."/>
            <person name="Tice H."/>
            <person name="Ticknor L.O."/>
            <person name="Wills P.L."/>
            <person name="Brettin T.S."/>
            <person name="Gilna P."/>
        </authorList>
    </citation>
    <scope>NUCLEOTIDE SEQUENCE [LARGE SCALE GENOMIC DNA]</scope>
    <source>
        <strain>97-27</strain>
    </source>
</reference>
<name>TLP_BACHK</name>
<keyword id="KW-0749">Sporulation</keyword>
<comment type="subcellular location">
    <subcellularLocation>
        <location evidence="1">Spore core</location>
    </subcellularLocation>
</comment>
<comment type="induction">
    <text evidence="1">Expressed only in the forespore compartment of sporulating cells.</text>
</comment>
<comment type="similarity">
    <text evidence="1">Belongs to the Tlp family.</text>
</comment>